<feature type="chain" id="PRO_0000172798" description="Uronate isomerase">
    <location>
        <begin position="1"/>
        <end position="469"/>
    </location>
</feature>
<gene>
    <name evidence="1" type="primary">uxaC</name>
    <name type="ordered locus">YPTB3478</name>
</gene>
<keyword id="KW-0413">Isomerase</keyword>
<protein>
    <recommendedName>
        <fullName evidence="1">Uronate isomerase</fullName>
        <ecNumber evidence="1">5.3.1.12</ecNumber>
    </recommendedName>
    <alternativeName>
        <fullName evidence="1">Glucuronate isomerase</fullName>
    </alternativeName>
    <alternativeName>
        <fullName evidence="1">Uronic isomerase</fullName>
    </alternativeName>
</protein>
<evidence type="ECO:0000255" key="1">
    <source>
        <dbReference type="HAMAP-Rule" id="MF_00675"/>
    </source>
</evidence>
<reference key="1">
    <citation type="journal article" date="2004" name="Proc. Natl. Acad. Sci. U.S.A.">
        <title>Insights into the evolution of Yersinia pestis through whole-genome comparison with Yersinia pseudotuberculosis.</title>
        <authorList>
            <person name="Chain P.S.G."/>
            <person name="Carniel E."/>
            <person name="Larimer F.W."/>
            <person name="Lamerdin J."/>
            <person name="Stoutland P.O."/>
            <person name="Regala W.M."/>
            <person name="Georgescu A.M."/>
            <person name="Vergez L.M."/>
            <person name="Land M.L."/>
            <person name="Motin V.L."/>
            <person name="Brubaker R.R."/>
            <person name="Fowler J."/>
            <person name="Hinnebusch J."/>
            <person name="Marceau M."/>
            <person name="Medigue C."/>
            <person name="Simonet M."/>
            <person name="Chenal-Francisque V."/>
            <person name="Souza B."/>
            <person name="Dacheux D."/>
            <person name="Elliott J.M."/>
            <person name="Derbise A."/>
            <person name="Hauser L.J."/>
            <person name="Garcia E."/>
        </authorList>
    </citation>
    <scope>NUCLEOTIDE SEQUENCE [LARGE SCALE GENOMIC DNA]</scope>
    <source>
        <strain>IP32953</strain>
    </source>
</reference>
<dbReference type="EC" id="5.3.1.12" evidence="1"/>
<dbReference type="EMBL" id="BX936398">
    <property type="protein sequence ID" value="CAH22716.1"/>
    <property type="molecule type" value="Genomic_DNA"/>
</dbReference>
<dbReference type="RefSeq" id="WP_002210410.1">
    <property type="nucleotide sequence ID" value="NZ_CP009712.1"/>
</dbReference>
<dbReference type="SMR" id="Q665N8"/>
<dbReference type="GeneID" id="57974037"/>
<dbReference type="KEGG" id="ypo:BZ17_3124"/>
<dbReference type="KEGG" id="yps:YPTB3478"/>
<dbReference type="PATRIC" id="fig|273123.14.peg.3276"/>
<dbReference type="UniPathway" id="UPA00246"/>
<dbReference type="Proteomes" id="UP000001011">
    <property type="component" value="Chromosome"/>
</dbReference>
<dbReference type="GO" id="GO:0008880">
    <property type="term" value="F:glucuronate isomerase activity"/>
    <property type="evidence" value="ECO:0007669"/>
    <property type="project" value="UniProtKB-UniRule"/>
</dbReference>
<dbReference type="GO" id="GO:0019698">
    <property type="term" value="P:D-galacturonate catabolic process"/>
    <property type="evidence" value="ECO:0007669"/>
    <property type="project" value="TreeGrafter"/>
</dbReference>
<dbReference type="GO" id="GO:0042840">
    <property type="term" value="P:D-glucuronate catabolic process"/>
    <property type="evidence" value="ECO:0007669"/>
    <property type="project" value="TreeGrafter"/>
</dbReference>
<dbReference type="Gene3D" id="3.20.20.140">
    <property type="entry name" value="Metal-dependent hydrolases"/>
    <property type="match status" value="1"/>
</dbReference>
<dbReference type="Gene3D" id="1.10.2020.10">
    <property type="entry name" value="uronate isomerase, domain 2, chain A"/>
    <property type="match status" value="1"/>
</dbReference>
<dbReference type="HAMAP" id="MF_00675">
    <property type="entry name" value="UxaC"/>
    <property type="match status" value="1"/>
</dbReference>
<dbReference type="InterPro" id="IPR032466">
    <property type="entry name" value="Metal_Hydrolase"/>
</dbReference>
<dbReference type="InterPro" id="IPR003766">
    <property type="entry name" value="Uronate_isomerase"/>
</dbReference>
<dbReference type="NCBIfam" id="NF002794">
    <property type="entry name" value="PRK02925.1"/>
    <property type="match status" value="1"/>
</dbReference>
<dbReference type="PANTHER" id="PTHR30068">
    <property type="entry name" value="URONATE ISOMERASE"/>
    <property type="match status" value="1"/>
</dbReference>
<dbReference type="PANTHER" id="PTHR30068:SF4">
    <property type="entry name" value="URONATE ISOMERASE"/>
    <property type="match status" value="1"/>
</dbReference>
<dbReference type="Pfam" id="PF02614">
    <property type="entry name" value="UxaC"/>
    <property type="match status" value="1"/>
</dbReference>
<dbReference type="SUPFAM" id="SSF51556">
    <property type="entry name" value="Metallo-dependent hydrolases"/>
    <property type="match status" value="1"/>
</dbReference>
<sequence>MSQFLTEDFLLDTEFARRLYHDYAKDQPIFDYHCHLPPEQIAENYRFKNMYDIWLKGDHYKWRAMRTNGVAERLCTGDASDREKFDAWAATVPHTIGNPLYHWTHLELRRPFGITGKLLSPATSEEIWQRGNELLAQDPFSARGIMQQMNVKMVGTTDDPIDDLRHHKAIAADGSFNIKVLPSWRPDKAFNIEAAGFNDYMQRLEAAADTSISRFADLCVALNKRMDHFAAHGCKVSDHALDVVVYGEADETTLDAILARRLAGNQPSTEEIAQFKTAVLLFLSGEYHRREWVQQYHIGALRNNNSRMFNLVGPDIGFDSINDQPLAQPLSRLLDAQGLRNALPKTILYCLNPRDNEVIGTMVGNFQGEGEAGKMQFGSGWWFNDQKDGMQRQMTQLAQLGLLSRFVGMLTDSRSFLSYTRHEYFRRILCQMIGRWVADGEAPADIALLGAMVKNICFDNAQQYFAIEL</sequence>
<organism>
    <name type="scientific">Yersinia pseudotuberculosis serotype I (strain IP32953)</name>
    <dbReference type="NCBI Taxonomy" id="273123"/>
    <lineage>
        <taxon>Bacteria</taxon>
        <taxon>Pseudomonadati</taxon>
        <taxon>Pseudomonadota</taxon>
        <taxon>Gammaproteobacteria</taxon>
        <taxon>Enterobacterales</taxon>
        <taxon>Yersiniaceae</taxon>
        <taxon>Yersinia</taxon>
    </lineage>
</organism>
<accession>Q665N8</accession>
<proteinExistence type="inferred from homology"/>
<comment type="catalytic activity">
    <reaction evidence="1">
        <text>D-glucuronate = D-fructuronate</text>
        <dbReference type="Rhea" id="RHEA:13049"/>
        <dbReference type="ChEBI" id="CHEBI:58720"/>
        <dbReference type="ChEBI" id="CHEBI:59863"/>
        <dbReference type="EC" id="5.3.1.12"/>
    </reaction>
</comment>
<comment type="catalytic activity">
    <reaction evidence="1">
        <text>aldehydo-D-galacturonate = keto-D-tagaturonate</text>
        <dbReference type="Rhea" id="RHEA:27702"/>
        <dbReference type="ChEBI" id="CHEBI:12952"/>
        <dbReference type="ChEBI" id="CHEBI:17886"/>
        <dbReference type="EC" id="5.3.1.12"/>
    </reaction>
</comment>
<comment type="pathway">
    <text evidence="1">Carbohydrate metabolism; pentose and glucuronate interconversion.</text>
</comment>
<comment type="similarity">
    <text evidence="1">Belongs to the metallo-dependent hydrolases superfamily. Uronate isomerase family.</text>
</comment>
<name>UXAC_YERPS</name>